<comment type="function">
    <text evidence="1 4 5 6">Restriction factor required to restrict infectivity of lentiviruses, such as HIV-1: acts by inhibiting an early step of viral infection. Impairs the penetration of the viral particle into the cytoplasm (PubMed:26416733, PubMed:26416734). Non-ATP-dependent, non-specific lipid transporter for phosphatidylserine, phosphatidylcholine, and phosphatidylethanolamine. Functions as a scramblase that flips lipids in both directions across the membrane. Phospholipid scrambling results in HIV-1 surface exposure of phosphatidylserine and loss of membrane asymmetry, which leads to changes in HIV-1 Env conformation and loss of infectivity (PubMed:37474505). Enhances the incorporation of serine into phosphatidylserine and sphingolipids. May play a role in providing serine molecules for the formation of myelin glycosphingolipids in oligodendrocytes (By similarity).</text>
</comment>
<comment type="catalytic activity">
    <reaction evidence="6">
        <text>a 1,2-diacyl-sn-glycero-3-phospho-L-serine(in) = a 1,2-diacyl-sn-glycero-3-phospho-L-serine(out)</text>
        <dbReference type="Rhea" id="RHEA:38663"/>
        <dbReference type="ChEBI" id="CHEBI:57262"/>
    </reaction>
</comment>
<comment type="catalytic activity">
    <reaction evidence="6">
        <text>a 1,2-diacyl-sn-glycero-3-phosphocholine(in) = a 1,2-diacyl-sn-glycero-3-phosphocholine(out)</text>
        <dbReference type="Rhea" id="RHEA:38571"/>
        <dbReference type="ChEBI" id="CHEBI:57643"/>
    </reaction>
</comment>
<comment type="catalytic activity">
    <reaction evidence="6">
        <text>a 1,2-diacyl-sn-glycero-3-phosphoethanolamine(in) = a 1,2-diacyl-sn-glycero-3-phosphoethanolamine(out)</text>
        <dbReference type="Rhea" id="RHEA:38895"/>
        <dbReference type="ChEBI" id="CHEBI:64612"/>
    </reaction>
</comment>
<comment type="subcellular location">
    <subcellularLocation>
        <location evidence="4 5">Cell membrane</location>
        <topology evidence="2">Multi-pass membrane protein</topology>
    </subcellularLocation>
</comment>
<comment type="subcellular location">
    <subcellularLocation>
        <location evidence="5 10">Cytoplasm</location>
        <location evidence="5 10">Perinuclear region</location>
    </subcellularLocation>
    <text evidence="5 10">(Microbial infection) Upon HIV-1 infection, it is redirected to perinuclear region following interaction with HIV-1 Nef, excluding it from virions particles, thereby preventing subsequent antiviral defense activity (PubMed:26416733, PubMed:26416734). Localizes to the cell membrane, where it is efficiently incorporated into budding virions and impairs subsequent virion entry into target cells (PubMed:26416733, PubMed:26416734).</text>
</comment>
<comment type="alternative products">
    <event type="alternative splicing"/>
    <isoform>
        <id>Q86VE9-1</id>
        <name>1</name>
        <sequence type="displayed"/>
    </isoform>
    <isoform>
        <id>Q86VE9-2</id>
        <name>2</name>
        <sequence type="described" ref="VSP_033055"/>
    </isoform>
    <isoform>
        <id>Q86VE9-3</id>
        <name>3</name>
        <sequence type="described" ref="VSP_033054"/>
    </isoform>
    <isoform>
        <id>Q86VE9-4</id>
        <name>4</name>
        <sequence type="described" ref="VSP_042310"/>
    </isoform>
</comment>
<comment type="tissue specificity">
    <text evidence="3">Highly expressed in placenta, skeletal muscle, spleen, thymus, testis and peripheral leukocyte and is expressed weakly in the heart, liver and fetal brain.</text>
</comment>
<comment type="similarity">
    <text evidence="9">Belongs to the TDE1 family.</text>
</comment>
<keyword id="KW-0025">Alternative splicing</keyword>
<keyword id="KW-0051">Antiviral defense</keyword>
<keyword id="KW-1003">Cell membrane</keyword>
<keyword id="KW-0963">Cytoplasm</keyword>
<keyword id="KW-0325">Glycoprotein</keyword>
<keyword id="KW-0945">Host-virus interaction</keyword>
<keyword id="KW-0391">Immunity</keyword>
<keyword id="KW-0399">Innate immunity</keyword>
<keyword id="KW-0444">Lipid biosynthesis</keyword>
<keyword id="KW-0443">Lipid metabolism</keyword>
<keyword id="KW-0472">Membrane</keyword>
<keyword id="KW-0594">Phospholipid biosynthesis</keyword>
<keyword id="KW-1208">Phospholipid metabolism</keyword>
<keyword id="KW-1267">Proteomics identification</keyword>
<keyword id="KW-1185">Reference proteome</keyword>
<keyword id="KW-0812">Transmembrane</keyword>
<keyword id="KW-1133">Transmembrane helix</keyword>
<reference key="1">
    <citation type="journal article" date="2003" name="Mol. Biol. Rep.">
        <title>Cloning and expression of a novel human C5orf12 gene, a member of the TMS_TDE family.</title>
        <authorList>
            <person name="Xu J."/>
            <person name="Ji C."/>
            <person name="Wang L."/>
            <person name="Cao Y."/>
            <person name="Dai J."/>
            <person name="Ye X."/>
            <person name="Zeng L."/>
            <person name="Dai J."/>
            <person name="Wu Q."/>
            <person name="Xie Y."/>
            <person name="Mao Y."/>
        </authorList>
    </citation>
    <scope>NUCLEOTIDE SEQUENCE [MRNA] (ISOFORM 1)</scope>
    <scope>FUNCTION</scope>
    <scope>TISSUE SPECIFICITY</scope>
    <source>
        <tissue>Fetus</tissue>
    </source>
</reference>
<reference key="2">
    <citation type="journal article" date="2004" name="Nat. Genet.">
        <title>Complete sequencing and characterization of 21,243 full-length human cDNAs.</title>
        <authorList>
            <person name="Ota T."/>
            <person name="Suzuki Y."/>
            <person name="Nishikawa T."/>
            <person name="Otsuki T."/>
            <person name="Sugiyama T."/>
            <person name="Irie R."/>
            <person name="Wakamatsu A."/>
            <person name="Hayashi K."/>
            <person name="Sato H."/>
            <person name="Nagai K."/>
            <person name="Kimura K."/>
            <person name="Makita H."/>
            <person name="Sekine M."/>
            <person name="Obayashi M."/>
            <person name="Nishi T."/>
            <person name="Shibahara T."/>
            <person name="Tanaka T."/>
            <person name="Ishii S."/>
            <person name="Yamamoto J."/>
            <person name="Saito K."/>
            <person name="Kawai Y."/>
            <person name="Isono Y."/>
            <person name="Nakamura Y."/>
            <person name="Nagahari K."/>
            <person name="Murakami K."/>
            <person name="Yasuda T."/>
            <person name="Iwayanagi T."/>
            <person name="Wagatsuma M."/>
            <person name="Shiratori A."/>
            <person name="Sudo H."/>
            <person name="Hosoiri T."/>
            <person name="Kaku Y."/>
            <person name="Kodaira H."/>
            <person name="Kondo H."/>
            <person name="Sugawara M."/>
            <person name="Takahashi M."/>
            <person name="Kanda K."/>
            <person name="Yokoi T."/>
            <person name="Furuya T."/>
            <person name="Kikkawa E."/>
            <person name="Omura Y."/>
            <person name="Abe K."/>
            <person name="Kamihara K."/>
            <person name="Katsuta N."/>
            <person name="Sato K."/>
            <person name="Tanikawa M."/>
            <person name="Yamazaki M."/>
            <person name="Ninomiya K."/>
            <person name="Ishibashi T."/>
            <person name="Yamashita H."/>
            <person name="Murakawa K."/>
            <person name="Fujimori K."/>
            <person name="Tanai H."/>
            <person name="Kimata M."/>
            <person name="Watanabe M."/>
            <person name="Hiraoka S."/>
            <person name="Chiba Y."/>
            <person name="Ishida S."/>
            <person name="Ono Y."/>
            <person name="Takiguchi S."/>
            <person name="Watanabe S."/>
            <person name="Yosida M."/>
            <person name="Hotuta T."/>
            <person name="Kusano J."/>
            <person name="Kanehori K."/>
            <person name="Takahashi-Fujii A."/>
            <person name="Hara H."/>
            <person name="Tanase T.-O."/>
            <person name="Nomura Y."/>
            <person name="Togiya S."/>
            <person name="Komai F."/>
            <person name="Hara R."/>
            <person name="Takeuchi K."/>
            <person name="Arita M."/>
            <person name="Imose N."/>
            <person name="Musashino K."/>
            <person name="Yuuki H."/>
            <person name="Oshima A."/>
            <person name="Sasaki N."/>
            <person name="Aotsuka S."/>
            <person name="Yoshikawa Y."/>
            <person name="Matsunawa H."/>
            <person name="Ichihara T."/>
            <person name="Shiohata N."/>
            <person name="Sano S."/>
            <person name="Moriya S."/>
            <person name="Momiyama H."/>
            <person name="Satoh N."/>
            <person name="Takami S."/>
            <person name="Terashima Y."/>
            <person name="Suzuki O."/>
            <person name="Nakagawa S."/>
            <person name="Senoh A."/>
            <person name="Mizoguchi H."/>
            <person name="Goto Y."/>
            <person name="Shimizu F."/>
            <person name="Wakebe H."/>
            <person name="Hishigaki H."/>
            <person name="Watanabe T."/>
            <person name="Sugiyama A."/>
            <person name="Takemoto M."/>
            <person name="Kawakami B."/>
            <person name="Yamazaki M."/>
            <person name="Watanabe K."/>
            <person name="Kumagai A."/>
            <person name="Itakura S."/>
            <person name="Fukuzumi Y."/>
            <person name="Fujimori Y."/>
            <person name="Komiyama M."/>
            <person name="Tashiro H."/>
            <person name="Tanigami A."/>
            <person name="Fujiwara T."/>
            <person name="Ono T."/>
            <person name="Yamada K."/>
            <person name="Fujii Y."/>
            <person name="Ozaki K."/>
            <person name="Hirao M."/>
            <person name="Ohmori Y."/>
            <person name="Kawabata A."/>
            <person name="Hikiji T."/>
            <person name="Kobatake N."/>
            <person name="Inagaki H."/>
            <person name="Ikema Y."/>
            <person name="Okamoto S."/>
            <person name="Okitani R."/>
            <person name="Kawakami T."/>
            <person name="Noguchi S."/>
            <person name="Itoh T."/>
            <person name="Shigeta K."/>
            <person name="Senba T."/>
            <person name="Matsumura K."/>
            <person name="Nakajima Y."/>
            <person name="Mizuno T."/>
            <person name="Morinaga M."/>
            <person name="Sasaki M."/>
            <person name="Togashi T."/>
            <person name="Oyama M."/>
            <person name="Hata H."/>
            <person name="Watanabe M."/>
            <person name="Komatsu T."/>
            <person name="Mizushima-Sugano J."/>
            <person name="Satoh T."/>
            <person name="Shirai Y."/>
            <person name="Takahashi Y."/>
            <person name="Nakagawa K."/>
            <person name="Okumura K."/>
            <person name="Nagase T."/>
            <person name="Nomura N."/>
            <person name="Kikuchi H."/>
            <person name="Masuho Y."/>
            <person name="Yamashita R."/>
            <person name="Nakai K."/>
            <person name="Yada T."/>
            <person name="Nakamura Y."/>
            <person name="Ohara O."/>
            <person name="Isogai T."/>
            <person name="Sugano S."/>
        </authorList>
    </citation>
    <scope>NUCLEOTIDE SEQUENCE [LARGE SCALE MRNA] (ISOFORM 4)</scope>
    <source>
        <tissue>Brain</tissue>
    </source>
</reference>
<reference key="3">
    <citation type="journal article" date="2004" name="Nature">
        <title>The DNA sequence and comparative analysis of human chromosome 5.</title>
        <authorList>
            <person name="Schmutz J."/>
            <person name="Martin J."/>
            <person name="Terry A."/>
            <person name="Couronne O."/>
            <person name="Grimwood J."/>
            <person name="Lowry S."/>
            <person name="Gordon L.A."/>
            <person name="Scott D."/>
            <person name="Xie G."/>
            <person name="Huang W."/>
            <person name="Hellsten U."/>
            <person name="Tran-Gyamfi M."/>
            <person name="She X."/>
            <person name="Prabhakar S."/>
            <person name="Aerts A."/>
            <person name="Altherr M."/>
            <person name="Bajorek E."/>
            <person name="Black S."/>
            <person name="Branscomb E."/>
            <person name="Caoile C."/>
            <person name="Challacombe J.F."/>
            <person name="Chan Y.M."/>
            <person name="Denys M."/>
            <person name="Detter J.C."/>
            <person name="Escobar J."/>
            <person name="Flowers D."/>
            <person name="Fotopulos D."/>
            <person name="Glavina T."/>
            <person name="Gomez M."/>
            <person name="Gonzales E."/>
            <person name="Goodstein D."/>
            <person name="Grigoriev I."/>
            <person name="Groza M."/>
            <person name="Hammon N."/>
            <person name="Hawkins T."/>
            <person name="Haydu L."/>
            <person name="Israni S."/>
            <person name="Jett J."/>
            <person name="Kadner K."/>
            <person name="Kimball H."/>
            <person name="Kobayashi A."/>
            <person name="Lopez F."/>
            <person name="Lou Y."/>
            <person name="Martinez D."/>
            <person name="Medina C."/>
            <person name="Morgan J."/>
            <person name="Nandkeshwar R."/>
            <person name="Noonan J.P."/>
            <person name="Pitluck S."/>
            <person name="Pollard M."/>
            <person name="Predki P."/>
            <person name="Priest J."/>
            <person name="Ramirez L."/>
            <person name="Retterer J."/>
            <person name="Rodriguez A."/>
            <person name="Rogers S."/>
            <person name="Salamov A."/>
            <person name="Salazar A."/>
            <person name="Thayer N."/>
            <person name="Tice H."/>
            <person name="Tsai M."/>
            <person name="Ustaszewska A."/>
            <person name="Vo N."/>
            <person name="Wheeler J."/>
            <person name="Wu K."/>
            <person name="Yang J."/>
            <person name="Dickson M."/>
            <person name="Cheng J.-F."/>
            <person name="Eichler E.E."/>
            <person name="Olsen A."/>
            <person name="Pennacchio L.A."/>
            <person name="Rokhsar D.S."/>
            <person name="Richardson P."/>
            <person name="Lucas S.M."/>
            <person name="Myers R.M."/>
            <person name="Rubin E.M."/>
        </authorList>
    </citation>
    <scope>NUCLEOTIDE SEQUENCE [LARGE SCALE GENOMIC DNA]</scope>
</reference>
<reference key="4">
    <citation type="submission" date="2005-07" db="EMBL/GenBank/DDBJ databases">
        <authorList>
            <person name="Mural R.J."/>
            <person name="Istrail S."/>
            <person name="Sutton G.G."/>
            <person name="Florea L."/>
            <person name="Halpern A.L."/>
            <person name="Mobarry C.M."/>
            <person name="Lippert R."/>
            <person name="Walenz B."/>
            <person name="Shatkay H."/>
            <person name="Dew I."/>
            <person name="Miller J.R."/>
            <person name="Flanigan M.J."/>
            <person name="Edwards N.J."/>
            <person name="Bolanos R."/>
            <person name="Fasulo D."/>
            <person name="Halldorsson B.V."/>
            <person name="Hannenhalli S."/>
            <person name="Turner R."/>
            <person name="Yooseph S."/>
            <person name="Lu F."/>
            <person name="Nusskern D.R."/>
            <person name="Shue B.C."/>
            <person name="Zheng X.H."/>
            <person name="Zhong F."/>
            <person name="Delcher A.L."/>
            <person name="Huson D.H."/>
            <person name="Kravitz S.A."/>
            <person name="Mouchard L."/>
            <person name="Reinert K."/>
            <person name="Remington K.A."/>
            <person name="Clark A.G."/>
            <person name="Waterman M.S."/>
            <person name="Eichler E.E."/>
            <person name="Adams M.D."/>
            <person name="Hunkapiller M.W."/>
            <person name="Myers E.W."/>
            <person name="Venter J.C."/>
        </authorList>
    </citation>
    <scope>NUCLEOTIDE SEQUENCE [LARGE SCALE GENOMIC DNA]</scope>
</reference>
<reference key="5">
    <citation type="journal article" date="2004" name="Genome Res.">
        <title>The status, quality, and expansion of the NIH full-length cDNA project: the Mammalian Gene Collection (MGC).</title>
        <authorList>
            <consortium name="The MGC Project Team"/>
        </authorList>
    </citation>
    <scope>NUCLEOTIDE SEQUENCE [LARGE SCALE MRNA] (ISOFORMS 2 AND 3)</scope>
</reference>
<reference key="6">
    <citation type="journal article" date="2015" name="Nature">
        <title>SERINC3 and SERINC5 restrict HIV-1 infectivity and are counteracted by Nef.</title>
        <authorList>
            <person name="Usami Y."/>
            <person name="Wu Y."/>
            <person name="Goettlinger H.G."/>
        </authorList>
    </citation>
    <scope>FUNCTION</scope>
    <scope>SUBCELLULAR LOCATION</scope>
    <scope>SUBCELLULAR LOCATION (MICROBIAL INFECTION)</scope>
</reference>
<reference key="7">
    <citation type="journal article" date="2015" name="Nature">
        <title>HIV-1 Nef promotes infection by excluding SERINC5 from virion incorporation.</title>
        <authorList>
            <person name="Rosa A."/>
            <person name="Chande A."/>
            <person name="Ziglio S."/>
            <person name="De Sanctis V."/>
            <person name="Bertorelli R."/>
            <person name="Goh S.L."/>
            <person name="McCauley S.M."/>
            <person name="Nowosielska A."/>
            <person name="Antonarakis S.E."/>
            <person name="Luban J."/>
            <person name="Santoni F.A."/>
            <person name="Pizzato M."/>
        </authorList>
    </citation>
    <scope>FUNCTION</scope>
    <scope>SUBCELLULAR LOCATION</scope>
    <scope>SUBCELLULAR LOCATION (MICROBIAL INFECTION)</scope>
</reference>
<reference key="8">
    <citation type="journal article" date="2023" name="Nat. Commun.">
        <title>Antiviral HIV-1 SERINC restriction factors disrupt virus membrane asymmetry.</title>
        <authorList>
            <person name="Leonhardt S.A."/>
            <person name="Purdy M.D."/>
            <person name="Grover J.R."/>
            <person name="Yang Z."/>
            <person name="Poulos S."/>
            <person name="McIntire W.E."/>
            <person name="Tatham E.A."/>
            <person name="Erramilli S.K."/>
            <person name="Nosol K."/>
            <person name="Lai K.K."/>
            <person name="Ding S."/>
            <person name="Lu M."/>
            <person name="Uchil P.D."/>
            <person name="Finzi A."/>
            <person name="Rein A."/>
            <person name="Kossiakoff A.A."/>
            <person name="Mothes W."/>
            <person name="Yeager M."/>
        </authorList>
    </citation>
    <scope>FUNCTION</scope>
    <scope>CATALYTIC ACTIVITY</scope>
    <scope>SUBCELLULAR LOCATION (MICROBIAL INFECTION)</scope>
    <scope>MUTAGENESIS OF SER-328 AND PHE-397</scope>
</reference>
<evidence type="ECO:0000250" key="1">
    <source>
        <dbReference type="UniProtKB" id="Q63175"/>
    </source>
</evidence>
<evidence type="ECO:0000255" key="2"/>
<evidence type="ECO:0000269" key="3">
    <source>
    </source>
</evidence>
<evidence type="ECO:0000269" key="4">
    <source>
    </source>
</evidence>
<evidence type="ECO:0000269" key="5">
    <source>
    </source>
</evidence>
<evidence type="ECO:0000269" key="6">
    <source>
    </source>
</evidence>
<evidence type="ECO:0000303" key="7">
    <source>
    </source>
</evidence>
<evidence type="ECO:0000303" key="8">
    <source>
    </source>
</evidence>
<evidence type="ECO:0000305" key="9"/>
<evidence type="ECO:0000305" key="10">
    <source>
    </source>
</evidence>
<evidence type="ECO:0000312" key="11">
    <source>
        <dbReference type="HGNC" id="HGNC:18825"/>
    </source>
</evidence>
<name>SERC5_HUMAN</name>
<protein>
    <recommendedName>
        <fullName evidence="9">Serine incorporator 5</fullName>
    </recommendedName>
</protein>
<dbReference type="EMBL" id="AF498273">
    <property type="protein sequence ID" value="AAP06800.1"/>
    <property type="molecule type" value="mRNA"/>
</dbReference>
<dbReference type="EMBL" id="AK297467">
    <property type="protein sequence ID" value="BAG59889.1"/>
    <property type="molecule type" value="mRNA"/>
</dbReference>
<dbReference type="EMBL" id="AC010260">
    <property type="status" value="NOT_ANNOTATED_CDS"/>
    <property type="molecule type" value="Genomic_DNA"/>
</dbReference>
<dbReference type="EMBL" id="AC012636">
    <property type="status" value="NOT_ANNOTATED_CDS"/>
    <property type="molecule type" value="Genomic_DNA"/>
</dbReference>
<dbReference type="EMBL" id="CH471084">
    <property type="protein sequence ID" value="EAW95843.1"/>
    <property type="molecule type" value="Genomic_DNA"/>
</dbReference>
<dbReference type="EMBL" id="CH471084">
    <property type="protein sequence ID" value="EAW95844.1"/>
    <property type="molecule type" value="Genomic_DNA"/>
</dbReference>
<dbReference type="EMBL" id="CH471084">
    <property type="protein sequence ID" value="EAW95845.1"/>
    <property type="molecule type" value="Genomic_DNA"/>
</dbReference>
<dbReference type="EMBL" id="BC101280">
    <property type="protein sequence ID" value="AAI01281.1"/>
    <property type="molecule type" value="mRNA"/>
</dbReference>
<dbReference type="EMBL" id="BC101281">
    <property type="protein sequence ID" value="AAI01282.1"/>
    <property type="molecule type" value="mRNA"/>
</dbReference>
<dbReference type="EMBL" id="BC101283">
    <property type="protein sequence ID" value="AAI01284.1"/>
    <property type="molecule type" value="mRNA"/>
</dbReference>
<dbReference type="CCDS" id="CCDS54874.1">
    <molecule id="Q86VE9-4"/>
</dbReference>
<dbReference type="CCDS" id="CCDS83009.1">
    <molecule id="Q86VE9-2"/>
</dbReference>
<dbReference type="RefSeq" id="NP_001167542.1">
    <molecule id="Q86VE9-2"/>
    <property type="nucleotide sequence ID" value="NM_001174071.3"/>
</dbReference>
<dbReference type="RefSeq" id="NP_001167543.1">
    <molecule id="Q86VE9-4"/>
    <property type="nucleotide sequence ID" value="NM_001174072.3"/>
</dbReference>
<dbReference type="RefSeq" id="NP_840060.1">
    <molecule id="Q86VE9-1"/>
    <property type="nucleotide sequence ID" value="NM_178276.7"/>
</dbReference>
<dbReference type="SMR" id="Q86VE9"/>
<dbReference type="BioGRID" id="129188">
    <property type="interactions" value="33"/>
</dbReference>
<dbReference type="DIP" id="DIP-47313N"/>
<dbReference type="FunCoup" id="Q86VE9">
    <property type="interactions" value="663"/>
</dbReference>
<dbReference type="IntAct" id="Q86VE9">
    <property type="interactions" value="2"/>
</dbReference>
<dbReference type="MINT" id="Q86VE9"/>
<dbReference type="STRING" id="9606.ENSP00000426237"/>
<dbReference type="TCDB" id="9.A.29.3.5">
    <property type="family name" value="the lantibiotic immunity protein/serine connector (lip/sip) family"/>
</dbReference>
<dbReference type="GlyCosmos" id="Q86VE9">
    <property type="glycosylation" value="2 sites, No reported glycans"/>
</dbReference>
<dbReference type="GlyGen" id="Q86VE9">
    <property type="glycosylation" value="4 sites"/>
</dbReference>
<dbReference type="iPTMnet" id="Q86VE9"/>
<dbReference type="PhosphoSitePlus" id="Q86VE9"/>
<dbReference type="SwissPalm" id="Q86VE9"/>
<dbReference type="BioMuta" id="SERINC5"/>
<dbReference type="DMDM" id="74714045"/>
<dbReference type="jPOST" id="Q86VE9"/>
<dbReference type="MassIVE" id="Q86VE9"/>
<dbReference type="PaxDb" id="9606-ENSP00000426237"/>
<dbReference type="PeptideAtlas" id="Q86VE9"/>
<dbReference type="ProteomicsDB" id="69993">
    <molecule id="Q86VE9-1"/>
</dbReference>
<dbReference type="ProteomicsDB" id="69994">
    <molecule id="Q86VE9-2"/>
</dbReference>
<dbReference type="ProteomicsDB" id="69995">
    <molecule id="Q86VE9-3"/>
</dbReference>
<dbReference type="ProteomicsDB" id="69996">
    <molecule id="Q86VE9-4"/>
</dbReference>
<dbReference type="Antibodypedia" id="49006">
    <property type="antibodies" value="23 antibodies from 9 providers"/>
</dbReference>
<dbReference type="DNASU" id="256987"/>
<dbReference type="Ensembl" id="ENST00000507668.7">
    <molecule id="Q86VE9-4"/>
    <property type="protein sequence ID" value="ENSP00000426237.3"/>
    <property type="gene ID" value="ENSG00000164300.18"/>
</dbReference>
<dbReference type="Ensembl" id="ENST00000509193.6">
    <molecule id="Q86VE9-2"/>
    <property type="protein sequence ID" value="ENSP00000426134.2"/>
    <property type="gene ID" value="ENSG00000164300.18"/>
</dbReference>
<dbReference type="Ensembl" id="ENST00000512972.6">
    <molecule id="Q86VE9-3"/>
    <property type="protein sequence ID" value="ENSP00000421665.2"/>
    <property type="gene ID" value="ENSG00000164300.18"/>
</dbReference>
<dbReference type="GeneID" id="256987"/>
<dbReference type="KEGG" id="hsa:256987"/>
<dbReference type="MANE-Select" id="ENST00000507668.7">
    <molecule id="Q86VE9-4"/>
    <property type="protein sequence ID" value="ENSP00000426237.3"/>
    <property type="RefSeq nucleotide sequence ID" value="NM_001174072.3"/>
    <property type="RefSeq protein sequence ID" value="NP_001167543.1"/>
</dbReference>
<dbReference type="UCSC" id="uc011ctj.2">
    <molecule id="Q86VE9-1"/>
    <property type="organism name" value="human"/>
</dbReference>
<dbReference type="AGR" id="HGNC:18825"/>
<dbReference type="CTD" id="256987"/>
<dbReference type="DisGeNET" id="256987"/>
<dbReference type="GeneCards" id="SERINC5"/>
<dbReference type="HGNC" id="HGNC:18825">
    <property type="gene designation" value="SERINC5"/>
</dbReference>
<dbReference type="HPA" id="ENSG00000164300">
    <property type="expression patterns" value="Low tissue specificity"/>
</dbReference>
<dbReference type="MIM" id="614551">
    <property type="type" value="gene"/>
</dbReference>
<dbReference type="neXtProt" id="NX_Q86VE9"/>
<dbReference type="OpenTargets" id="ENSG00000164300"/>
<dbReference type="PharmGKB" id="PA38698"/>
<dbReference type="VEuPathDB" id="HostDB:ENSG00000164300"/>
<dbReference type="eggNOG" id="KOG2592">
    <property type="taxonomic scope" value="Eukaryota"/>
</dbReference>
<dbReference type="GeneTree" id="ENSGT01030000234623"/>
<dbReference type="HOGENOM" id="CLU_029574_5_2_1"/>
<dbReference type="InParanoid" id="Q86VE9"/>
<dbReference type="OMA" id="GCTFNKI"/>
<dbReference type="OrthoDB" id="5963193at2759"/>
<dbReference type="PAN-GO" id="Q86VE9">
    <property type="GO annotations" value="1 GO annotation based on evolutionary models"/>
</dbReference>
<dbReference type="PhylomeDB" id="Q86VE9"/>
<dbReference type="TreeFam" id="TF312881"/>
<dbReference type="PathwayCommons" id="Q86VE9"/>
<dbReference type="Reactome" id="R-HSA-977347">
    <property type="pathway name" value="Serine biosynthesis"/>
</dbReference>
<dbReference type="SignaLink" id="Q86VE9"/>
<dbReference type="BioGRID-ORCS" id="256987">
    <property type="hits" value="7 hits in 1154 CRISPR screens"/>
</dbReference>
<dbReference type="ChiTaRS" id="SERINC5">
    <property type="organism name" value="human"/>
</dbReference>
<dbReference type="GenomeRNAi" id="256987"/>
<dbReference type="Pharos" id="Q86VE9">
    <property type="development level" value="Tbio"/>
</dbReference>
<dbReference type="PRO" id="PR:Q86VE9"/>
<dbReference type="Proteomes" id="UP000005640">
    <property type="component" value="Chromosome 5"/>
</dbReference>
<dbReference type="RNAct" id="Q86VE9">
    <property type="molecule type" value="protein"/>
</dbReference>
<dbReference type="Bgee" id="ENSG00000164300">
    <property type="expression patterns" value="Expressed in tibia and 206 other cell types or tissues"/>
</dbReference>
<dbReference type="ExpressionAtlas" id="Q86VE9">
    <property type="expression patterns" value="baseline and differential"/>
</dbReference>
<dbReference type="GO" id="GO:0005813">
    <property type="term" value="C:centrosome"/>
    <property type="evidence" value="ECO:0000314"/>
    <property type="project" value="HPA"/>
</dbReference>
<dbReference type="GO" id="GO:0005829">
    <property type="term" value="C:cytosol"/>
    <property type="evidence" value="ECO:0000314"/>
    <property type="project" value="HPA"/>
</dbReference>
<dbReference type="GO" id="GO:0070062">
    <property type="term" value="C:extracellular exosome"/>
    <property type="evidence" value="ECO:0007005"/>
    <property type="project" value="UniProtKB"/>
</dbReference>
<dbReference type="GO" id="GO:0005794">
    <property type="term" value="C:Golgi apparatus"/>
    <property type="evidence" value="ECO:0007669"/>
    <property type="project" value="Ensembl"/>
</dbReference>
<dbReference type="GO" id="GO:0043231">
    <property type="term" value="C:intracellular membrane-bounded organelle"/>
    <property type="evidence" value="ECO:0000314"/>
    <property type="project" value="HPA"/>
</dbReference>
<dbReference type="GO" id="GO:0016020">
    <property type="term" value="C:membrane"/>
    <property type="evidence" value="ECO:0000318"/>
    <property type="project" value="GO_Central"/>
</dbReference>
<dbReference type="GO" id="GO:0043209">
    <property type="term" value="C:myelin sheath"/>
    <property type="evidence" value="ECO:0007669"/>
    <property type="project" value="Ensembl"/>
</dbReference>
<dbReference type="GO" id="GO:0048471">
    <property type="term" value="C:perinuclear region of cytoplasm"/>
    <property type="evidence" value="ECO:0007669"/>
    <property type="project" value="UniProtKB-SubCell"/>
</dbReference>
<dbReference type="GO" id="GO:0005886">
    <property type="term" value="C:plasma membrane"/>
    <property type="evidence" value="ECO:0000314"/>
    <property type="project" value="HPA"/>
</dbReference>
<dbReference type="GO" id="GO:0015194">
    <property type="term" value="F:L-serine transmembrane transporter activity"/>
    <property type="evidence" value="ECO:0000304"/>
    <property type="project" value="Reactome"/>
</dbReference>
<dbReference type="GO" id="GO:0017128">
    <property type="term" value="F:phospholipid scramblase activity"/>
    <property type="evidence" value="ECO:0000314"/>
    <property type="project" value="UniProtKB"/>
</dbReference>
<dbReference type="GO" id="GO:0140374">
    <property type="term" value="P:antiviral innate immune response"/>
    <property type="evidence" value="ECO:0000314"/>
    <property type="project" value="UniProtKB"/>
</dbReference>
<dbReference type="GO" id="GO:0006564">
    <property type="term" value="P:L-serine biosynthetic process"/>
    <property type="evidence" value="ECO:0000304"/>
    <property type="project" value="Reactome"/>
</dbReference>
<dbReference type="GO" id="GO:0042552">
    <property type="term" value="P:myelination"/>
    <property type="evidence" value="ECO:0007669"/>
    <property type="project" value="Ensembl"/>
</dbReference>
<dbReference type="GO" id="GO:0006658">
    <property type="term" value="P:phosphatidylserine metabolic process"/>
    <property type="evidence" value="ECO:0000250"/>
    <property type="project" value="HGNC-UCL"/>
</dbReference>
<dbReference type="GO" id="GO:0008654">
    <property type="term" value="P:phospholipid biosynthetic process"/>
    <property type="evidence" value="ECO:0007669"/>
    <property type="project" value="UniProtKB-KW"/>
</dbReference>
<dbReference type="GO" id="GO:0017121">
    <property type="term" value="P:plasma membrane phospholipid scrambling"/>
    <property type="evidence" value="ECO:0000314"/>
    <property type="project" value="UniProtKB"/>
</dbReference>
<dbReference type="InterPro" id="IPR005016">
    <property type="entry name" value="TDE1/TMS"/>
</dbReference>
<dbReference type="PANTHER" id="PTHR10383">
    <property type="entry name" value="SERINE INCORPORATOR"/>
    <property type="match status" value="1"/>
</dbReference>
<dbReference type="PANTHER" id="PTHR10383:SF16">
    <property type="entry name" value="SERINE INCORPORATOR 5"/>
    <property type="match status" value="1"/>
</dbReference>
<dbReference type="Pfam" id="PF03348">
    <property type="entry name" value="Serinc"/>
    <property type="match status" value="1"/>
</dbReference>
<proteinExistence type="evidence at protein level"/>
<gene>
    <name evidence="11" type="primary">SERINC5</name>
    <name type="synonym">C5orf12</name>
</gene>
<accession>Q86VE9</accession>
<accession>B4DMH7</accession>
<accession>Q495A4</accession>
<accession>Q495A6</accession>
<feature type="chain" id="PRO_0000330630" description="Serine incorporator 5">
    <location>
        <begin position="1"/>
        <end position="423"/>
    </location>
</feature>
<feature type="topological domain" description="Extracellular" evidence="2">
    <location>
        <begin position="1"/>
        <end position="36"/>
    </location>
</feature>
<feature type="transmembrane region" description="Helical" evidence="2">
    <location>
        <begin position="37"/>
        <end position="57"/>
    </location>
</feature>
<feature type="topological domain" description="Cytoplasmic" evidence="2">
    <location>
        <begin position="58"/>
        <end position="89"/>
    </location>
</feature>
<feature type="transmembrane region" description="Helical" evidence="2">
    <location>
        <begin position="90"/>
        <end position="110"/>
    </location>
</feature>
<feature type="topological domain" description="Extracellular" evidence="2">
    <location>
        <begin position="111"/>
        <end position="124"/>
    </location>
</feature>
<feature type="transmembrane region" description="Helical" evidence="2">
    <location>
        <begin position="125"/>
        <end position="145"/>
    </location>
</feature>
<feature type="topological domain" description="Cytoplasmic" evidence="2">
    <location>
        <begin position="146"/>
        <end position="156"/>
    </location>
</feature>
<feature type="transmembrane region" description="Helical" evidence="2">
    <location>
        <begin position="157"/>
        <end position="177"/>
    </location>
</feature>
<feature type="topological domain" description="Extracellular" evidence="2">
    <location>
        <begin position="178"/>
        <end position="198"/>
    </location>
</feature>
<feature type="transmembrane region" description="Helical" evidence="2">
    <location>
        <begin position="199"/>
        <end position="219"/>
    </location>
</feature>
<feature type="topological domain" description="Cytoplasmic" evidence="2">
    <location>
        <begin position="220"/>
        <end position="230"/>
    </location>
</feature>
<feature type="transmembrane region" description="Helical" evidence="2">
    <location>
        <begin position="231"/>
        <end position="251"/>
    </location>
</feature>
<feature type="topological domain" description="Extracellular" evidence="2">
    <location>
        <begin position="252"/>
        <end position="258"/>
    </location>
</feature>
<feature type="transmembrane region" description="Helical" evidence="2">
    <location>
        <begin position="259"/>
        <end position="279"/>
    </location>
</feature>
<feature type="topological domain" description="Cytoplasmic" evidence="2">
    <location>
        <begin position="280"/>
        <end position="311"/>
    </location>
</feature>
<feature type="transmembrane region" description="Helical" evidence="2">
    <location>
        <begin position="312"/>
        <end position="332"/>
    </location>
</feature>
<feature type="topological domain" description="Extracellular" evidence="2">
    <location>
        <begin position="333"/>
        <end position="385"/>
    </location>
</feature>
<feature type="transmembrane region" description="Helical" evidence="2">
    <location>
        <begin position="386"/>
        <end position="406"/>
    </location>
</feature>
<feature type="topological domain" description="Cytoplasmic" evidence="2">
    <location>
        <begin position="407"/>
        <end position="423"/>
    </location>
</feature>
<feature type="glycosylation site" description="N-linked (GlcNAc...) asparagine" evidence="2">
    <location>
        <position position="113"/>
    </location>
</feature>
<feature type="glycosylation site" description="N-linked (GlcNAc...) asparagine" evidence="2">
    <location>
        <position position="183"/>
    </location>
</feature>
<feature type="splice variant" id="VSP_033054" description="In isoform 3." evidence="8">
    <original>NHVRSAFHLLP</original>
    <variation>KNYQC</variation>
    <location>
        <begin position="413"/>
        <end position="423"/>
    </location>
</feature>
<feature type="splice variant" id="VSP_033055" description="In isoform 2." evidence="8">
    <original>NHVR</original>
    <variation>K</variation>
    <location>
        <begin position="413"/>
        <end position="416"/>
    </location>
</feature>
<feature type="splice variant" id="VSP_042310" description="In isoform 4." evidence="7">
    <original>HVRSAFHLLP</original>
    <variation>YESANIESFFSGSWSIFWVKMASCWICVLLYLCTLVAPLCCPTREFSV</variation>
    <location>
        <begin position="414"/>
        <end position="423"/>
    </location>
</feature>
<feature type="mutagenesis site" description="No effect on scrambalase activity. Impaired antiviral activity." evidence="6">
    <original>S</original>
    <variation>I</variation>
    <location>
        <position position="328"/>
    </location>
</feature>
<feature type="mutagenesis site" description="No effect on scrambalase activity. Impaired antiviral activity." evidence="6">
    <original>F</original>
    <variation>L</variation>
    <location>
        <position position="397"/>
    </location>
</feature>
<sequence>MSAQCCAGQLACCCGSAGCSLCCDCCPRIRQSLSTRFMYALYFILVVVLCCIMMSTTVAHKMKEHIPFFEDMCKGIKAGDTCEKLVGYSAVYRVCFGMACFFFIFCLLTLKINNSKSCRAHIHNGFWFFKLLLLGAMCSGAFFIPDQDTFLNAWRYVGAVGGFLFIGIQLLLLVEFAHKWNKNWTAGTASNKLWYASLALVTLIMYSIATGGLVLMAVFYTQKDSCMENKILLGVNGGLCLLISLVAISPWVQNRQPHSGLLQSGVISCYVTYLTFSALSSKPAEVVLDEHGKNVTICVPDFGQDLYRDENLVTILGTSLLIGCILYSCLTSTTRSSSDALQGRYAAPELEIARCCFCFSPGGEDTEEQQPGKEGPRVIYDEKKGTVYIYSYFHFVFFLASLYVMMTVTNWFNHVRSAFHLLP</sequence>
<organism>
    <name type="scientific">Homo sapiens</name>
    <name type="common">Human</name>
    <dbReference type="NCBI Taxonomy" id="9606"/>
    <lineage>
        <taxon>Eukaryota</taxon>
        <taxon>Metazoa</taxon>
        <taxon>Chordata</taxon>
        <taxon>Craniata</taxon>
        <taxon>Vertebrata</taxon>
        <taxon>Euteleostomi</taxon>
        <taxon>Mammalia</taxon>
        <taxon>Eutheria</taxon>
        <taxon>Euarchontoglires</taxon>
        <taxon>Primates</taxon>
        <taxon>Haplorrhini</taxon>
        <taxon>Catarrhini</taxon>
        <taxon>Hominidae</taxon>
        <taxon>Homo</taxon>
    </lineage>
</organism>